<proteinExistence type="inferred from homology"/>
<keyword id="KW-1185">Reference proteome</keyword>
<keyword id="KW-0687">Ribonucleoprotein</keyword>
<keyword id="KW-0689">Ribosomal protein</keyword>
<keyword id="KW-0694">RNA-binding</keyword>
<keyword id="KW-0699">rRNA-binding</keyword>
<reference key="1">
    <citation type="journal article" date="2008" name="PLoS Genet.">
        <title>Complete genome sequence of the complex carbohydrate-degrading marine bacterium, Saccharophagus degradans strain 2-40 T.</title>
        <authorList>
            <person name="Weiner R.M."/>
            <person name="Taylor L.E. II"/>
            <person name="Henrissat B."/>
            <person name="Hauser L."/>
            <person name="Land M."/>
            <person name="Coutinho P.M."/>
            <person name="Rancurel C."/>
            <person name="Saunders E.H."/>
            <person name="Longmire A.G."/>
            <person name="Zhang H."/>
            <person name="Bayer E.A."/>
            <person name="Gilbert H.J."/>
            <person name="Larimer F."/>
            <person name="Zhulin I.B."/>
            <person name="Ekborg N.A."/>
            <person name="Lamed R."/>
            <person name="Richardson P.M."/>
            <person name="Borovok I."/>
            <person name="Hutcheson S."/>
        </authorList>
    </citation>
    <scope>NUCLEOTIDE SEQUENCE [LARGE SCALE GENOMIC DNA]</scope>
    <source>
        <strain>2-40 / ATCC 43961 / DSM 17024</strain>
    </source>
</reference>
<name>RL4_SACD2</name>
<dbReference type="EMBL" id="CP000282">
    <property type="protein sequence ID" value="ABD80223.1"/>
    <property type="molecule type" value="Genomic_DNA"/>
</dbReference>
<dbReference type="RefSeq" id="WP_011467443.1">
    <property type="nucleotide sequence ID" value="NC_007912.1"/>
</dbReference>
<dbReference type="SMR" id="Q21M56"/>
<dbReference type="STRING" id="203122.Sde_0961"/>
<dbReference type="GeneID" id="98612646"/>
<dbReference type="KEGG" id="sde:Sde_0961"/>
<dbReference type="eggNOG" id="COG0088">
    <property type="taxonomic scope" value="Bacteria"/>
</dbReference>
<dbReference type="HOGENOM" id="CLU_041575_5_2_6"/>
<dbReference type="OrthoDB" id="9803201at2"/>
<dbReference type="Proteomes" id="UP000001947">
    <property type="component" value="Chromosome"/>
</dbReference>
<dbReference type="GO" id="GO:1990904">
    <property type="term" value="C:ribonucleoprotein complex"/>
    <property type="evidence" value="ECO:0007669"/>
    <property type="project" value="UniProtKB-KW"/>
</dbReference>
<dbReference type="GO" id="GO:0005840">
    <property type="term" value="C:ribosome"/>
    <property type="evidence" value="ECO:0007669"/>
    <property type="project" value="UniProtKB-KW"/>
</dbReference>
<dbReference type="GO" id="GO:0019843">
    <property type="term" value="F:rRNA binding"/>
    <property type="evidence" value="ECO:0007669"/>
    <property type="project" value="UniProtKB-UniRule"/>
</dbReference>
<dbReference type="GO" id="GO:0003735">
    <property type="term" value="F:structural constituent of ribosome"/>
    <property type="evidence" value="ECO:0007669"/>
    <property type="project" value="InterPro"/>
</dbReference>
<dbReference type="GO" id="GO:0006412">
    <property type="term" value="P:translation"/>
    <property type="evidence" value="ECO:0007669"/>
    <property type="project" value="UniProtKB-UniRule"/>
</dbReference>
<dbReference type="FunFam" id="3.40.1370.10:FF:000001">
    <property type="entry name" value="50S ribosomal protein L4"/>
    <property type="match status" value="1"/>
</dbReference>
<dbReference type="Gene3D" id="3.40.1370.10">
    <property type="match status" value="1"/>
</dbReference>
<dbReference type="HAMAP" id="MF_01328_B">
    <property type="entry name" value="Ribosomal_uL4_B"/>
    <property type="match status" value="1"/>
</dbReference>
<dbReference type="InterPro" id="IPR002136">
    <property type="entry name" value="Ribosomal_uL4"/>
</dbReference>
<dbReference type="InterPro" id="IPR013005">
    <property type="entry name" value="Ribosomal_uL4-like"/>
</dbReference>
<dbReference type="InterPro" id="IPR023574">
    <property type="entry name" value="Ribosomal_uL4_dom_sf"/>
</dbReference>
<dbReference type="NCBIfam" id="TIGR03953">
    <property type="entry name" value="rplD_bact"/>
    <property type="match status" value="1"/>
</dbReference>
<dbReference type="PANTHER" id="PTHR10746">
    <property type="entry name" value="50S RIBOSOMAL PROTEIN L4"/>
    <property type="match status" value="1"/>
</dbReference>
<dbReference type="PANTHER" id="PTHR10746:SF6">
    <property type="entry name" value="LARGE RIBOSOMAL SUBUNIT PROTEIN UL4M"/>
    <property type="match status" value="1"/>
</dbReference>
<dbReference type="Pfam" id="PF00573">
    <property type="entry name" value="Ribosomal_L4"/>
    <property type="match status" value="1"/>
</dbReference>
<dbReference type="SUPFAM" id="SSF52166">
    <property type="entry name" value="Ribosomal protein L4"/>
    <property type="match status" value="1"/>
</dbReference>
<sequence>MELSIATPQGAKGTVSVSEAAFGREFNQDLVHQAVVAFMAGARQGTKAQKNRAAVSGGGKKPWRQKGTGRARAGTIRSPLWRSGGVTFAAEPRDHSQKLNKKMYRAAIRCILSELARQERLVVVEEFDLDAPKTKDLVQKLAQFDLADVLIIGEDVSENLYLAARNLHKVDVRDVNGLDPVSLIRFDKVVVTVAALKKLEEVLV</sequence>
<feature type="chain" id="PRO_0000242432" description="Large ribosomal subunit protein uL4">
    <location>
        <begin position="1"/>
        <end position="204"/>
    </location>
</feature>
<feature type="region of interest" description="Disordered" evidence="2">
    <location>
        <begin position="49"/>
        <end position="72"/>
    </location>
</feature>
<protein>
    <recommendedName>
        <fullName evidence="1">Large ribosomal subunit protein uL4</fullName>
    </recommendedName>
    <alternativeName>
        <fullName evidence="3">50S ribosomal protein L4</fullName>
    </alternativeName>
</protein>
<comment type="function">
    <text evidence="1">One of the primary rRNA binding proteins, this protein initially binds near the 5'-end of the 23S rRNA. It is important during the early stages of 50S assembly. It makes multiple contacts with different domains of the 23S rRNA in the assembled 50S subunit and ribosome.</text>
</comment>
<comment type="function">
    <text evidence="1">Forms part of the polypeptide exit tunnel.</text>
</comment>
<comment type="subunit">
    <text evidence="1">Part of the 50S ribosomal subunit.</text>
</comment>
<comment type="similarity">
    <text evidence="1">Belongs to the universal ribosomal protein uL4 family.</text>
</comment>
<evidence type="ECO:0000255" key="1">
    <source>
        <dbReference type="HAMAP-Rule" id="MF_01328"/>
    </source>
</evidence>
<evidence type="ECO:0000256" key="2">
    <source>
        <dbReference type="SAM" id="MobiDB-lite"/>
    </source>
</evidence>
<evidence type="ECO:0000305" key="3"/>
<gene>
    <name evidence="1" type="primary">rplD</name>
    <name type="ordered locus">Sde_0961</name>
</gene>
<organism>
    <name type="scientific">Saccharophagus degradans (strain 2-40 / ATCC 43961 / DSM 17024)</name>
    <dbReference type="NCBI Taxonomy" id="203122"/>
    <lineage>
        <taxon>Bacteria</taxon>
        <taxon>Pseudomonadati</taxon>
        <taxon>Pseudomonadota</taxon>
        <taxon>Gammaproteobacteria</taxon>
        <taxon>Cellvibrionales</taxon>
        <taxon>Cellvibrionaceae</taxon>
        <taxon>Saccharophagus</taxon>
    </lineage>
</organism>
<accession>Q21M56</accession>